<dbReference type="EMBL" id="AE014297">
    <property type="protein sequence ID" value="AAF55018.2"/>
    <property type="molecule type" value="Genomic_DNA"/>
</dbReference>
<dbReference type="RefSeq" id="NP_524348.2">
    <property type="nucleotide sequence ID" value="NM_079624.3"/>
</dbReference>
<dbReference type="SMR" id="Q9VFN2"/>
<dbReference type="FunCoup" id="Q9VFN2">
    <property type="interactions" value="4"/>
</dbReference>
<dbReference type="STRING" id="7227.FBpp0082351"/>
<dbReference type="PaxDb" id="7227-FBpp0082351"/>
<dbReference type="EnsemblMetazoa" id="FBtr0082890">
    <property type="protein sequence ID" value="FBpp0082351"/>
    <property type="gene ID" value="FBgn0038203"/>
</dbReference>
<dbReference type="GeneID" id="41715"/>
<dbReference type="KEGG" id="dme:Dmel_CG14360"/>
<dbReference type="AGR" id="FB:FBgn0038203"/>
<dbReference type="CTD" id="41715"/>
<dbReference type="FlyBase" id="FBgn0038203">
    <property type="gene designation" value="Or88a"/>
</dbReference>
<dbReference type="VEuPathDB" id="VectorBase:FBgn0038203"/>
<dbReference type="eggNOG" id="ENOG502T7Y2">
    <property type="taxonomic scope" value="Eukaryota"/>
</dbReference>
<dbReference type="GeneTree" id="ENSGT00560000077544"/>
<dbReference type="HOGENOM" id="CLU_687485_0_0_1"/>
<dbReference type="InParanoid" id="Q9VFN2"/>
<dbReference type="OMA" id="VDNSMVN"/>
<dbReference type="OrthoDB" id="6765072at2759"/>
<dbReference type="PhylomeDB" id="Q9VFN2"/>
<dbReference type="BioGRID-ORCS" id="41715">
    <property type="hits" value="0 hits in 1 CRISPR screen"/>
</dbReference>
<dbReference type="GenomeRNAi" id="41715"/>
<dbReference type="PRO" id="PR:Q9VFN2"/>
<dbReference type="Proteomes" id="UP000000803">
    <property type="component" value="Chromosome 3R"/>
</dbReference>
<dbReference type="Bgee" id="FBgn0038203">
    <property type="expression patterns" value="Expressed in adult olfactory receptor neuron Or88a (Drosophila) in antenna and 1 other cell type or tissue"/>
</dbReference>
<dbReference type="ExpressionAtlas" id="Q9VFN2">
    <property type="expression patterns" value="baseline and differential"/>
</dbReference>
<dbReference type="GO" id="GO:0032590">
    <property type="term" value="C:dendrite membrane"/>
    <property type="evidence" value="ECO:0000250"/>
    <property type="project" value="FlyBase"/>
</dbReference>
<dbReference type="GO" id="GO:0005886">
    <property type="term" value="C:plasma membrane"/>
    <property type="evidence" value="ECO:0000318"/>
    <property type="project" value="GO_Central"/>
</dbReference>
<dbReference type="GO" id="GO:0170020">
    <property type="term" value="F:ionotropic olfactory receptor activity"/>
    <property type="evidence" value="ECO:0007005"/>
    <property type="project" value="FlyBase"/>
</dbReference>
<dbReference type="GO" id="GO:0005549">
    <property type="term" value="F:odorant binding"/>
    <property type="evidence" value="ECO:0000250"/>
    <property type="project" value="FlyBase"/>
</dbReference>
<dbReference type="GO" id="GO:0004984">
    <property type="term" value="F:olfactory receptor activity"/>
    <property type="evidence" value="ECO:0000318"/>
    <property type="project" value="GO_Central"/>
</dbReference>
<dbReference type="GO" id="GO:0050911">
    <property type="term" value="P:detection of chemical stimulus involved in sensory perception of smell"/>
    <property type="evidence" value="ECO:0007005"/>
    <property type="project" value="FlyBase"/>
</dbReference>
<dbReference type="GO" id="GO:0007165">
    <property type="term" value="P:signal transduction"/>
    <property type="evidence" value="ECO:0007669"/>
    <property type="project" value="UniProtKB-KW"/>
</dbReference>
<dbReference type="InterPro" id="IPR004117">
    <property type="entry name" value="7tm6_olfct_rcpt"/>
</dbReference>
<dbReference type="PANTHER" id="PTHR21137">
    <property type="entry name" value="ODORANT RECEPTOR"/>
    <property type="match status" value="1"/>
</dbReference>
<dbReference type="PANTHER" id="PTHR21137:SF35">
    <property type="entry name" value="ODORANT RECEPTOR 19A-RELATED"/>
    <property type="match status" value="1"/>
</dbReference>
<dbReference type="Pfam" id="PF02949">
    <property type="entry name" value="7tm_6"/>
    <property type="match status" value="1"/>
</dbReference>
<evidence type="ECO:0000250" key="1"/>
<evidence type="ECO:0000255" key="2"/>
<evidence type="ECO:0000269" key="3">
    <source>
    </source>
</evidence>
<evidence type="ECO:0000269" key="4">
    <source>
    </source>
</evidence>
<evidence type="ECO:0000305" key="5"/>
<proteinExistence type="evidence at transcript level"/>
<organism>
    <name type="scientific">Drosophila melanogaster</name>
    <name type="common">Fruit fly</name>
    <dbReference type="NCBI Taxonomy" id="7227"/>
    <lineage>
        <taxon>Eukaryota</taxon>
        <taxon>Metazoa</taxon>
        <taxon>Ecdysozoa</taxon>
        <taxon>Arthropoda</taxon>
        <taxon>Hexapoda</taxon>
        <taxon>Insecta</taxon>
        <taxon>Pterygota</taxon>
        <taxon>Neoptera</taxon>
        <taxon>Endopterygota</taxon>
        <taxon>Diptera</taxon>
        <taxon>Brachycera</taxon>
        <taxon>Muscomorpha</taxon>
        <taxon>Ephydroidea</taxon>
        <taxon>Drosophilidae</taxon>
        <taxon>Drosophila</taxon>
        <taxon>Sophophora</taxon>
    </lineage>
</organism>
<accession>Q9VFN2</accession>
<keyword id="KW-1003">Cell membrane</keyword>
<keyword id="KW-0472">Membrane</keyword>
<keyword id="KW-0552">Olfaction</keyword>
<keyword id="KW-0675">Receptor</keyword>
<keyword id="KW-1185">Reference proteome</keyword>
<keyword id="KW-0716">Sensory transduction</keyword>
<keyword id="KW-0807">Transducer</keyword>
<keyword id="KW-0812">Transmembrane</keyword>
<keyword id="KW-1133">Transmembrane helix</keyword>
<feature type="chain" id="PRO_0000174280" description="Odorant receptor 88a">
    <location>
        <begin position="1"/>
        <end position="401"/>
    </location>
</feature>
<feature type="topological domain" description="Cytoplasmic" evidence="2">
    <location>
        <begin position="1"/>
        <end position="26"/>
    </location>
</feature>
<feature type="transmembrane region" description="Helical; Name=1" evidence="2">
    <location>
        <begin position="27"/>
        <end position="47"/>
    </location>
</feature>
<feature type="topological domain" description="Extracellular" evidence="2">
    <location>
        <begin position="48"/>
        <end position="52"/>
    </location>
</feature>
<feature type="transmembrane region" description="Helical; Name=2" evidence="2">
    <location>
        <begin position="53"/>
        <end position="73"/>
    </location>
</feature>
<feature type="topological domain" description="Cytoplasmic" evidence="2">
    <location>
        <begin position="74"/>
        <end position="142"/>
    </location>
</feature>
<feature type="transmembrane region" description="Helical; Name=3" evidence="2">
    <location>
        <begin position="143"/>
        <end position="163"/>
    </location>
</feature>
<feature type="topological domain" description="Extracellular" evidence="2">
    <location>
        <begin position="164"/>
        <end position="191"/>
    </location>
</feature>
<feature type="transmembrane region" description="Helical; Name=4" evidence="2">
    <location>
        <begin position="192"/>
        <end position="212"/>
    </location>
</feature>
<feature type="topological domain" description="Cytoplasmic" evidence="2">
    <location>
        <begin position="213"/>
        <end position="277"/>
    </location>
</feature>
<feature type="transmembrane region" description="Helical; Name=5" evidence="2">
    <location>
        <begin position="278"/>
        <end position="298"/>
    </location>
</feature>
<feature type="topological domain" description="Extracellular" evidence="2">
    <location>
        <begin position="299"/>
        <end position="303"/>
    </location>
</feature>
<feature type="transmembrane region" description="Helical; Name=6" evidence="2">
    <location>
        <begin position="304"/>
        <end position="324"/>
    </location>
</feature>
<feature type="topological domain" description="Cytoplasmic" evidence="2">
    <location>
        <begin position="325"/>
        <end position="370"/>
    </location>
</feature>
<feature type="transmembrane region" description="Helical; Name=7" evidence="2">
    <location>
        <begin position="371"/>
        <end position="391"/>
    </location>
</feature>
<feature type="topological domain" description="Extracellular" evidence="2">
    <location>
        <begin position="392"/>
        <end position="401"/>
    </location>
</feature>
<protein>
    <recommendedName>
        <fullName>Odorant receptor 88a</fullName>
    </recommendedName>
</protein>
<reference key="1">
    <citation type="journal article" date="2000" name="Science">
        <title>The genome sequence of Drosophila melanogaster.</title>
        <authorList>
            <person name="Adams M.D."/>
            <person name="Celniker S.E."/>
            <person name="Holt R.A."/>
            <person name="Evans C.A."/>
            <person name="Gocayne J.D."/>
            <person name="Amanatides P.G."/>
            <person name="Scherer S.E."/>
            <person name="Li P.W."/>
            <person name="Hoskins R.A."/>
            <person name="Galle R.F."/>
            <person name="George R.A."/>
            <person name="Lewis S.E."/>
            <person name="Richards S."/>
            <person name="Ashburner M."/>
            <person name="Henderson S.N."/>
            <person name="Sutton G.G."/>
            <person name="Wortman J.R."/>
            <person name="Yandell M.D."/>
            <person name="Zhang Q."/>
            <person name="Chen L.X."/>
            <person name="Brandon R.C."/>
            <person name="Rogers Y.-H.C."/>
            <person name="Blazej R.G."/>
            <person name="Champe M."/>
            <person name="Pfeiffer B.D."/>
            <person name="Wan K.H."/>
            <person name="Doyle C."/>
            <person name="Baxter E.G."/>
            <person name="Helt G."/>
            <person name="Nelson C.R."/>
            <person name="Miklos G.L.G."/>
            <person name="Abril J.F."/>
            <person name="Agbayani A."/>
            <person name="An H.-J."/>
            <person name="Andrews-Pfannkoch C."/>
            <person name="Baldwin D."/>
            <person name="Ballew R.M."/>
            <person name="Basu A."/>
            <person name="Baxendale J."/>
            <person name="Bayraktaroglu L."/>
            <person name="Beasley E.M."/>
            <person name="Beeson K.Y."/>
            <person name="Benos P.V."/>
            <person name="Berman B.P."/>
            <person name="Bhandari D."/>
            <person name="Bolshakov S."/>
            <person name="Borkova D."/>
            <person name="Botchan M.R."/>
            <person name="Bouck J."/>
            <person name="Brokstein P."/>
            <person name="Brottier P."/>
            <person name="Burtis K.C."/>
            <person name="Busam D.A."/>
            <person name="Butler H."/>
            <person name="Cadieu E."/>
            <person name="Center A."/>
            <person name="Chandra I."/>
            <person name="Cherry J.M."/>
            <person name="Cawley S."/>
            <person name="Dahlke C."/>
            <person name="Davenport L.B."/>
            <person name="Davies P."/>
            <person name="de Pablos B."/>
            <person name="Delcher A."/>
            <person name="Deng Z."/>
            <person name="Mays A.D."/>
            <person name="Dew I."/>
            <person name="Dietz S.M."/>
            <person name="Dodson K."/>
            <person name="Doup L.E."/>
            <person name="Downes M."/>
            <person name="Dugan-Rocha S."/>
            <person name="Dunkov B.C."/>
            <person name="Dunn P."/>
            <person name="Durbin K.J."/>
            <person name="Evangelista C.C."/>
            <person name="Ferraz C."/>
            <person name="Ferriera S."/>
            <person name="Fleischmann W."/>
            <person name="Fosler C."/>
            <person name="Gabrielian A.E."/>
            <person name="Garg N.S."/>
            <person name="Gelbart W.M."/>
            <person name="Glasser K."/>
            <person name="Glodek A."/>
            <person name="Gong F."/>
            <person name="Gorrell J.H."/>
            <person name="Gu Z."/>
            <person name="Guan P."/>
            <person name="Harris M."/>
            <person name="Harris N.L."/>
            <person name="Harvey D.A."/>
            <person name="Heiman T.J."/>
            <person name="Hernandez J.R."/>
            <person name="Houck J."/>
            <person name="Hostin D."/>
            <person name="Houston K.A."/>
            <person name="Howland T.J."/>
            <person name="Wei M.-H."/>
            <person name="Ibegwam C."/>
            <person name="Jalali M."/>
            <person name="Kalush F."/>
            <person name="Karpen G.H."/>
            <person name="Ke Z."/>
            <person name="Kennison J.A."/>
            <person name="Ketchum K.A."/>
            <person name="Kimmel B.E."/>
            <person name="Kodira C.D."/>
            <person name="Kraft C.L."/>
            <person name="Kravitz S."/>
            <person name="Kulp D."/>
            <person name="Lai Z."/>
            <person name="Lasko P."/>
            <person name="Lei Y."/>
            <person name="Levitsky A.A."/>
            <person name="Li J.H."/>
            <person name="Li Z."/>
            <person name="Liang Y."/>
            <person name="Lin X."/>
            <person name="Liu X."/>
            <person name="Mattei B."/>
            <person name="McIntosh T.C."/>
            <person name="McLeod M.P."/>
            <person name="McPherson D."/>
            <person name="Merkulov G."/>
            <person name="Milshina N.V."/>
            <person name="Mobarry C."/>
            <person name="Morris J."/>
            <person name="Moshrefi A."/>
            <person name="Mount S.M."/>
            <person name="Moy M."/>
            <person name="Murphy B."/>
            <person name="Murphy L."/>
            <person name="Muzny D.M."/>
            <person name="Nelson D.L."/>
            <person name="Nelson D.R."/>
            <person name="Nelson K.A."/>
            <person name="Nixon K."/>
            <person name="Nusskern D.R."/>
            <person name="Pacleb J.M."/>
            <person name="Palazzolo M."/>
            <person name="Pittman G.S."/>
            <person name="Pan S."/>
            <person name="Pollard J."/>
            <person name="Puri V."/>
            <person name="Reese M.G."/>
            <person name="Reinert K."/>
            <person name="Remington K."/>
            <person name="Saunders R.D.C."/>
            <person name="Scheeler F."/>
            <person name="Shen H."/>
            <person name="Shue B.C."/>
            <person name="Siden-Kiamos I."/>
            <person name="Simpson M."/>
            <person name="Skupski M.P."/>
            <person name="Smith T.J."/>
            <person name="Spier E."/>
            <person name="Spradling A.C."/>
            <person name="Stapleton M."/>
            <person name="Strong R."/>
            <person name="Sun E."/>
            <person name="Svirskas R."/>
            <person name="Tector C."/>
            <person name="Turner R."/>
            <person name="Venter E."/>
            <person name="Wang A.H."/>
            <person name="Wang X."/>
            <person name="Wang Z.-Y."/>
            <person name="Wassarman D.A."/>
            <person name="Weinstock G.M."/>
            <person name="Weissenbach J."/>
            <person name="Williams S.M."/>
            <person name="Woodage T."/>
            <person name="Worley K.C."/>
            <person name="Wu D."/>
            <person name="Yang S."/>
            <person name="Yao Q.A."/>
            <person name="Ye J."/>
            <person name="Yeh R.-F."/>
            <person name="Zaveri J.S."/>
            <person name="Zhan M."/>
            <person name="Zhang G."/>
            <person name="Zhao Q."/>
            <person name="Zheng L."/>
            <person name="Zheng X.H."/>
            <person name="Zhong F.N."/>
            <person name="Zhong W."/>
            <person name="Zhou X."/>
            <person name="Zhu S.C."/>
            <person name="Zhu X."/>
            <person name="Smith H.O."/>
            <person name="Gibbs R.A."/>
            <person name="Myers E.W."/>
            <person name="Rubin G.M."/>
            <person name="Venter J.C."/>
        </authorList>
    </citation>
    <scope>NUCLEOTIDE SEQUENCE [LARGE SCALE GENOMIC DNA]</scope>
    <source>
        <strain>Berkeley</strain>
    </source>
</reference>
<reference key="2">
    <citation type="journal article" date="2002" name="Genome Biol.">
        <title>Annotation of the Drosophila melanogaster euchromatic genome: a systematic review.</title>
        <authorList>
            <person name="Misra S."/>
            <person name="Crosby M.A."/>
            <person name="Mungall C.J."/>
            <person name="Matthews B.B."/>
            <person name="Campbell K.S."/>
            <person name="Hradecky P."/>
            <person name="Huang Y."/>
            <person name="Kaminker J.S."/>
            <person name="Millburn G.H."/>
            <person name="Prochnik S.E."/>
            <person name="Smith C.D."/>
            <person name="Tupy J.L."/>
            <person name="Whitfield E.J."/>
            <person name="Bayraktaroglu L."/>
            <person name="Berman B.P."/>
            <person name="Bettencourt B.R."/>
            <person name="Celniker S.E."/>
            <person name="de Grey A.D.N.J."/>
            <person name="Drysdale R.A."/>
            <person name="Harris N.L."/>
            <person name="Richter J."/>
            <person name="Russo S."/>
            <person name="Schroeder A.J."/>
            <person name="Shu S.Q."/>
            <person name="Stapleton M."/>
            <person name="Yamada C."/>
            <person name="Ashburner M."/>
            <person name="Gelbart W.M."/>
            <person name="Rubin G.M."/>
            <person name="Lewis S.E."/>
        </authorList>
    </citation>
    <scope>GENOME REANNOTATION</scope>
    <source>
        <strain>Berkeley</strain>
    </source>
</reference>
<reference key="3">
    <citation type="journal article" date="2000" name="Cell">
        <title>An olfactory sensory map in the fly brain.</title>
        <authorList>
            <person name="Vosshall L.B."/>
            <person name="Wong A.M."/>
            <person name="Axel R."/>
        </authorList>
    </citation>
    <scope>TISSUE SPECIFICITY</scope>
</reference>
<reference key="4">
    <citation type="journal article" date="2006" name="Cell">
        <title>Coding of odors by a receptor repertoire.</title>
        <authorList>
            <person name="Hallem E.A."/>
            <person name="Carlson J.R."/>
        </authorList>
    </citation>
    <scope>FUNCTION</scope>
</reference>
<sequence>MKPTEIKKPYRMEEFLRPQMFQEVAQMVHFQWRRNPVDNSMVNASMVPFCLSAFLNVLFFGCNGWDIIGHFWLGHPANQNPPVLSITIYFSIRGLMLYLKRKEIVEFVNDLDRECPRDLVSQLDMQMDETYRNFWQRYRFIRIYSHLGGPMFCVVPLALFLLTHEGKDTPVAQHEQLLGGWLPCGVRKDPNFYLLVWSFDLMCTTCGVSFFVTFDNLFNVMQGHLVMHLGHLARQFSAIDPRQSLTDEKRFFVDLRLLVQRQQLLNGLCRKYNDIFKVAFLVSNFVGAGSLCFYLFMLSETSDVLIIAQYILPTLVLVGFTFEICLRGTQLEKASEGLESSLRSQEWYLGSRRYRKFYLLWTQYCQRTQQLGAFGLIQVNMVHFTEIMQLAYRLFTFLKSH</sequence>
<gene>
    <name type="primary">Or88a</name>
    <name type="ORF">CG14360</name>
</gene>
<comment type="function">
    <text evidence="4">Odorant receptor which mediates acceptance or avoidance behavior, depending on its substrates. The odorant receptor repertoire encodes a large collection of odor stimuli that vary widely in identity, intensity, and duration. May form a complex with Orco to form odorant-sensing units, providing sensitive and prolonged odorant signaling and calcium permeability.</text>
</comment>
<comment type="subunit">
    <text evidence="1">Interacts with Orco. Complexes exist early in the endomembrane system in olfactory sensory neurons (OSNs), coupling these complexes to the conserved ciliary trafficking pathway (By similarity).</text>
</comment>
<comment type="subcellular location">
    <subcellularLocation>
        <location evidence="1">Cell membrane</location>
        <topology evidence="1">Multi-pass membrane protein</topology>
    </subcellularLocation>
</comment>
<comment type="tissue specificity">
    <text evidence="3">Expressed in olfactory sensory neurons in the antenna.</text>
</comment>
<comment type="miscellaneous">
    <text>The atypical heteromeric and topological design of the odorant receptors appears to be an insect-specific solution for odor recognition, making the OR/Orco complex an attractive target for the development of highly selective insect repellents to disrupt olfactory-mediated host-seeking behaviors of insect disease vectors. Odor-evoked OR currents are independent of known G-protein-coupled second messenger pathways.</text>
</comment>
<comment type="similarity">
    <text evidence="5">Belongs to the insect chemoreceptor superfamily. Heteromeric odorant receptor channel (TC 1.A.69) family. Or49a subfamily.</text>
</comment>
<name>OR88A_DROME</name>